<keyword id="KW-1185">Reference proteome</keyword>
<accession>O30268</accession>
<reference key="1">
    <citation type="journal article" date="1997" name="Nature">
        <title>The complete genome sequence of the hyperthermophilic, sulphate-reducing archaeon Archaeoglobus fulgidus.</title>
        <authorList>
            <person name="Klenk H.-P."/>
            <person name="Clayton R.A."/>
            <person name="Tomb J.-F."/>
            <person name="White O."/>
            <person name="Nelson K.E."/>
            <person name="Ketchum K.A."/>
            <person name="Dodson R.J."/>
            <person name="Gwinn M.L."/>
            <person name="Hickey E.K."/>
            <person name="Peterson J.D."/>
            <person name="Richardson D.L."/>
            <person name="Kerlavage A.R."/>
            <person name="Graham D.E."/>
            <person name="Kyrpides N.C."/>
            <person name="Fleischmann R.D."/>
            <person name="Quackenbush J."/>
            <person name="Lee N.H."/>
            <person name="Sutton G.G."/>
            <person name="Gill S.R."/>
            <person name="Kirkness E.F."/>
            <person name="Dougherty B.A."/>
            <person name="McKenney K."/>
            <person name="Adams M.D."/>
            <person name="Loftus B.J."/>
            <person name="Peterson S.N."/>
            <person name="Reich C.I."/>
            <person name="McNeil L.K."/>
            <person name="Badger J.H."/>
            <person name="Glodek A."/>
            <person name="Zhou L."/>
            <person name="Overbeek R."/>
            <person name="Gocayne J.D."/>
            <person name="Weidman J.F."/>
            <person name="McDonald L.A."/>
            <person name="Utterback T.R."/>
            <person name="Cotton M.D."/>
            <person name="Spriggs T."/>
            <person name="Artiach P."/>
            <person name="Kaine B.P."/>
            <person name="Sykes S.M."/>
            <person name="Sadow P.W."/>
            <person name="D'Andrea K.P."/>
            <person name="Bowman C."/>
            <person name="Fujii C."/>
            <person name="Garland S.A."/>
            <person name="Mason T.M."/>
            <person name="Olsen G.J."/>
            <person name="Fraser C.M."/>
            <person name="Smith H.O."/>
            <person name="Woese C.R."/>
            <person name="Venter J.C."/>
        </authorList>
    </citation>
    <scope>NUCLEOTIDE SEQUENCE [LARGE SCALE GENOMIC DNA]</scope>
    <source>
        <strain>ATCC 49558 / DSM 4304 / JCM 9628 / NBRC 100126 / VC-16</strain>
    </source>
</reference>
<protein>
    <recommendedName>
        <fullName>Uncharacterized protein AF_2403</fullName>
    </recommendedName>
</protein>
<name>Y2403_ARCFU</name>
<gene>
    <name type="ordered locus">AF_2403</name>
</gene>
<proteinExistence type="predicted"/>
<organism>
    <name type="scientific">Archaeoglobus fulgidus (strain ATCC 49558 / DSM 4304 / JCM 9628 / NBRC 100126 / VC-16)</name>
    <dbReference type="NCBI Taxonomy" id="224325"/>
    <lineage>
        <taxon>Archaea</taxon>
        <taxon>Methanobacteriati</taxon>
        <taxon>Methanobacteriota</taxon>
        <taxon>Archaeoglobi</taxon>
        <taxon>Archaeoglobales</taxon>
        <taxon>Archaeoglobaceae</taxon>
        <taxon>Archaeoglobus</taxon>
    </lineage>
</organism>
<dbReference type="EMBL" id="AE000782">
    <property type="protein sequence ID" value="AAB91269.1"/>
    <property type="molecule type" value="Genomic_DNA"/>
</dbReference>
<dbReference type="PIR" id="D69550">
    <property type="entry name" value="D69550"/>
</dbReference>
<dbReference type="RefSeq" id="WP_010879890.1">
    <property type="nucleotide sequence ID" value="NC_000917.1"/>
</dbReference>
<dbReference type="PaxDb" id="224325-AF_2403"/>
<dbReference type="EnsemblBacteria" id="AAB91269">
    <property type="protein sequence ID" value="AAB91269"/>
    <property type="gene ID" value="AF_2403"/>
</dbReference>
<dbReference type="GeneID" id="1485634"/>
<dbReference type="KEGG" id="afu:AF_2403"/>
<dbReference type="eggNOG" id="arCOG10357">
    <property type="taxonomic scope" value="Archaea"/>
</dbReference>
<dbReference type="HOGENOM" id="CLU_2712586_0_0_2"/>
<dbReference type="Proteomes" id="UP000002199">
    <property type="component" value="Chromosome"/>
</dbReference>
<sequence>MLQPMEPKTVKLAVTGKRTRALMIVYPETLSYRVVDCSRRLFCRIHVSKNCPPYCPIVVAAKDFVSGRREPK</sequence>
<feature type="chain" id="PRO_0000128153" description="Uncharacterized protein AF_2403">
    <location>
        <begin position="1"/>
        <end position="72"/>
    </location>
</feature>